<keyword id="KW-0997">Cell inner membrane</keyword>
<keyword id="KW-1003">Cell membrane</keyword>
<keyword id="KW-0407">Ion channel</keyword>
<keyword id="KW-0406">Ion transport</keyword>
<keyword id="KW-0472">Membrane</keyword>
<keyword id="KW-0479">Metal-binding</keyword>
<keyword id="KW-1185">Reference proteome</keyword>
<keyword id="KW-0915">Sodium</keyword>
<keyword id="KW-0812">Transmembrane</keyword>
<keyword id="KW-1133">Transmembrane helix</keyword>
<keyword id="KW-0813">Transport</keyword>
<organism>
    <name type="scientific">Burkholderia pseudomallei (strain K96243)</name>
    <dbReference type="NCBI Taxonomy" id="272560"/>
    <lineage>
        <taxon>Bacteria</taxon>
        <taxon>Pseudomonadati</taxon>
        <taxon>Pseudomonadota</taxon>
        <taxon>Betaproteobacteria</taxon>
        <taxon>Burkholderiales</taxon>
        <taxon>Burkholderiaceae</taxon>
        <taxon>Burkholderia</taxon>
        <taxon>pseudomallei group</taxon>
    </lineage>
</organism>
<evidence type="ECO:0000255" key="1">
    <source>
        <dbReference type="HAMAP-Rule" id="MF_00454"/>
    </source>
</evidence>
<gene>
    <name evidence="1" type="primary">fluC</name>
    <name evidence="1" type="synonym">crcB</name>
    <name type="ordered locus">BPSL2638</name>
</gene>
<reference key="1">
    <citation type="journal article" date="2004" name="Proc. Natl. Acad. Sci. U.S.A.">
        <title>Genomic plasticity of the causative agent of melioidosis, Burkholderia pseudomallei.</title>
        <authorList>
            <person name="Holden M.T.G."/>
            <person name="Titball R.W."/>
            <person name="Peacock S.J."/>
            <person name="Cerdeno-Tarraga A.-M."/>
            <person name="Atkins T."/>
            <person name="Crossman L.C."/>
            <person name="Pitt T."/>
            <person name="Churcher C."/>
            <person name="Mungall K.L."/>
            <person name="Bentley S.D."/>
            <person name="Sebaihia M."/>
            <person name="Thomson N.R."/>
            <person name="Bason N."/>
            <person name="Beacham I.R."/>
            <person name="Brooks K."/>
            <person name="Brown K.A."/>
            <person name="Brown N.F."/>
            <person name="Challis G.L."/>
            <person name="Cherevach I."/>
            <person name="Chillingworth T."/>
            <person name="Cronin A."/>
            <person name="Crossett B."/>
            <person name="Davis P."/>
            <person name="DeShazer D."/>
            <person name="Feltwell T."/>
            <person name="Fraser A."/>
            <person name="Hance Z."/>
            <person name="Hauser H."/>
            <person name="Holroyd S."/>
            <person name="Jagels K."/>
            <person name="Keith K.E."/>
            <person name="Maddison M."/>
            <person name="Moule S."/>
            <person name="Price C."/>
            <person name="Quail M.A."/>
            <person name="Rabbinowitsch E."/>
            <person name="Rutherford K."/>
            <person name="Sanders M."/>
            <person name="Simmonds M."/>
            <person name="Songsivilai S."/>
            <person name="Stevens K."/>
            <person name="Tumapa S."/>
            <person name="Vesaratchavest M."/>
            <person name="Whitehead S."/>
            <person name="Yeats C."/>
            <person name="Barrell B.G."/>
            <person name="Oyston P.C.F."/>
            <person name="Parkhill J."/>
        </authorList>
    </citation>
    <scope>NUCLEOTIDE SEQUENCE [LARGE SCALE GENOMIC DNA]</scope>
    <source>
        <strain>K96243</strain>
    </source>
</reference>
<feature type="chain" id="PRO_0000110080" description="Fluoride-specific ion channel FluC">
    <location>
        <begin position="1"/>
        <end position="128"/>
    </location>
</feature>
<feature type="transmembrane region" description="Helical" evidence="1">
    <location>
        <begin position="5"/>
        <end position="25"/>
    </location>
</feature>
<feature type="transmembrane region" description="Helical" evidence="1">
    <location>
        <begin position="35"/>
        <end position="55"/>
    </location>
</feature>
<feature type="transmembrane region" description="Helical" evidence="1">
    <location>
        <begin position="67"/>
        <end position="87"/>
    </location>
</feature>
<feature type="transmembrane region" description="Helical" evidence="1">
    <location>
        <begin position="96"/>
        <end position="116"/>
    </location>
</feature>
<feature type="binding site" evidence="1">
    <location>
        <position position="75"/>
    </location>
    <ligand>
        <name>Na(+)</name>
        <dbReference type="ChEBI" id="CHEBI:29101"/>
        <note>structural</note>
    </ligand>
</feature>
<feature type="binding site" evidence="1">
    <location>
        <position position="78"/>
    </location>
    <ligand>
        <name>Na(+)</name>
        <dbReference type="ChEBI" id="CHEBI:29101"/>
        <note>structural</note>
    </ligand>
</feature>
<name>FLUC_BURPS</name>
<protein>
    <recommendedName>
        <fullName evidence="1">Fluoride-specific ion channel FluC</fullName>
    </recommendedName>
</protein>
<comment type="function">
    <text evidence="1">Fluoride-specific ion channel. Important for reducing fluoride concentration in the cell, thus reducing its toxicity.</text>
</comment>
<comment type="catalytic activity">
    <reaction evidence="1">
        <text>fluoride(in) = fluoride(out)</text>
        <dbReference type="Rhea" id="RHEA:76159"/>
        <dbReference type="ChEBI" id="CHEBI:17051"/>
    </reaction>
    <physiologicalReaction direction="left-to-right" evidence="1">
        <dbReference type="Rhea" id="RHEA:76160"/>
    </physiologicalReaction>
</comment>
<comment type="activity regulation">
    <text evidence="1">Na(+) is not transported, but it plays an essential structural role and its presence is essential for fluoride channel function.</text>
</comment>
<comment type="subcellular location">
    <subcellularLocation>
        <location evidence="1">Cell inner membrane</location>
        <topology evidence="1">Multi-pass membrane protein</topology>
    </subcellularLocation>
</comment>
<comment type="similarity">
    <text evidence="1">Belongs to the fluoride channel Fluc/FEX (TC 1.A.43) family.</text>
</comment>
<dbReference type="EMBL" id="BX571965">
    <property type="protein sequence ID" value="CAH36646.1"/>
    <property type="molecule type" value="Genomic_DNA"/>
</dbReference>
<dbReference type="RefSeq" id="WP_004186560.1">
    <property type="nucleotide sequence ID" value="NZ_CP009538.1"/>
</dbReference>
<dbReference type="RefSeq" id="YP_109234.1">
    <property type="nucleotide sequence ID" value="NC_006350.1"/>
</dbReference>
<dbReference type="SMR" id="Q63RN4"/>
<dbReference type="STRING" id="272560.BPSL2638"/>
<dbReference type="GeneID" id="92979864"/>
<dbReference type="KEGG" id="bps:BPSL2638"/>
<dbReference type="PATRIC" id="fig|272560.51.peg.2710"/>
<dbReference type="eggNOG" id="COG0239">
    <property type="taxonomic scope" value="Bacteria"/>
</dbReference>
<dbReference type="Proteomes" id="UP000000605">
    <property type="component" value="Chromosome 1"/>
</dbReference>
<dbReference type="GO" id="GO:0005886">
    <property type="term" value="C:plasma membrane"/>
    <property type="evidence" value="ECO:0007669"/>
    <property type="project" value="UniProtKB-SubCell"/>
</dbReference>
<dbReference type="GO" id="GO:0062054">
    <property type="term" value="F:fluoride channel activity"/>
    <property type="evidence" value="ECO:0007669"/>
    <property type="project" value="UniProtKB-UniRule"/>
</dbReference>
<dbReference type="GO" id="GO:0046872">
    <property type="term" value="F:metal ion binding"/>
    <property type="evidence" value="ECO:0007669"/>
    <property type="project" value="UniProtKB-KW"/>
</dbReference>
<dbReference type="GO" id="GO:0140114">
    <property type="term" value="P:cellular detoxification of fluoride"/>
    <property type="evidence" value="ECO:0007669"/>
    <property type="project" value="UniProtKB-UniRule"/>
</dbReference>
<dbReference type="HAMAP" id="MF_00454">
    <property type="entry name" value="FluC"/>
    <property type="match status" value="1"/>
</dbReference>
<dbReference type="InterPro" id="IPR003691">
    <property type="entry name" value="FluC"/>
</dbReference>
<dbReference type="NCBIfam" id="TIGR00494">
    <property type="entry name" value="crcB"/>
    <property type="match status" value="1"/>
</dbReference>
<dbReference type="NCBIfam" id="NF010792">
    <property type="entry name" value="PRK14196.1"/>
    <property type="match status" value="1"/>
</dbReference>
<dbReference type="PANTHER" id="PTHR28259">
    <property type="entry name" value="FLUORIDE EXPORT PROTEIN 1-RELATED"/>
    <property type="match status" value="1"/>
</dbReference>
<dbReference type="PANTHER" id="PTHR28259:SF1">
    <property type="entry name" value="FLUORIDE EXPORT PROTEIN 1-RELATED"/>
    <property type="match status" value="1"/>
</dbReference>
<dbReference type="Pfam" id="PF02537">
    <property type="entry name" value="CRCB"/>
    <property type="match status" value="1"/>
</dbReference>
<sequence length="128" mass="13522">MFYSIVAIFVGAGFGALLRWFLSIGLNALLPEVPLGTLASNLIGGYLIGIAVVAFATRAGLPPEWRLFVITGFMGGLTTFSTYSVEVMTHAVQGEFGWALAVAALHLIGSFTLTGLGMWTARAWLAPA</sequence>
<accession>Q63RN4</accession>
<proteinExistence type="inferred from homology"/>